<accession>Q99MK8</accession>
<accession>Q99LL8</accession>
<feature type="chain" id="PRO_0000085629" description="Beta-adrenergic receptor kinase 1">
    <location>
        <begin position="1"/>
        <end position="689"/>
    </location>
</feature>
<feature type="domain" description="RGS" evidence="6">
    <location>
        <begin position="54"/>
        <end position="175"/>
    </location>
</feature>
<feature type="domain" description="Protein kinase" evidence="5">
    <location>
        <begin position="191"/>
        <end position="453"/>
    </location>
</feature>
<feature type="domain" description="AGC-kinase C-terminal" evidence="7">
    <location>
        <begin position="454"/>
        <end position="521"/>
    </location>
</feature>
<feature type="domain" description="PH" evidence="4">
    <location>
        <begin position="558"/>
        <end position="652"/>
    </location>
</feature>
<feature type="region of interest" description="N-terminal">
    <location>
        <begin position="1"/>
        <end position="190"/>
    </location>
</feature>
<feature type="active site" description="Proton acceptor" evidence="5 8">
    <location>
        <position position="317"/>
    </location>
</feature>
<feature type="binding site" evidence="5">
    <location>
        <begin position="197"/>
        <end position="205"/>
    </location>
    <ligand>
        <name>ATP</name>
        <dbReference type="ChEBI" id="CHEBI:30616"/>
    </ligand>
</feature>
<feature type="binding site" evidence="5">
    <location>
        <position position="220"/>
    </location>
    <ligand>
        <name>ATP</name>
        <dbReference type="ChEBI" id="CHEBI:30616"/>
    </ligand>
</feature>
<feature type="site" description="Required for receptor phosphorylation" evidence="2">
    <location>
        <position position="3"/>
    </location>
</feature>
<feature type="site" description="Required for receptor phosphorylation" evidence="2">
    <location>
        <position position="4"/>
    </location>
</feature>
<feature type="site" description="Required for receptor phosphorylation" evidence="2">
    <location>
        <position position="10"/>
    </location>
</feature>
<feature type="modified residue" description="Phosphoserine" evidence="12">
    <location>
        <position position="670"/>
    </location>
</feature>
<feature type="sequence conflict" description="In Ref. 1; AAK21896." evidence="10" ref="1">
    <original>D</original>
    <variation>N</variation>
    <location>
        <position position="160"/>
    </location>
</feature>
<feature type="sequence conflict" description="In Ref. 1; AAK21896." evidence="10" ref="1">
    <original>W</original>
    <variation>C</variation>
    <location>
        <position position="374"/>
    </location>
</feature>
<feature type="sequence conflict" description="In Ref. 1; AAK21896." evidence="10" ref="1">
    <original>E</original>
    <variation>V</variation>
    <location>
        <position position="520"/>
    </location>
</feature>
<feature type="sequence conflict" description="In Ref. 1; AAK21896." evidence="10" ref="1">
    <original>L</original>
    <variation>F</variation>
    <location>
        <position position="600"/>
    </location>
</feature>
<feature type="sequence conflict" description="In Ref. 1; AAK21896." evidence="10" ref="1">
    <original>P</original>
    <variation>R</variation>
    <location>
        <position position="679"/>
    </location>
</feature>
<comment type="function">
    <text evidence="1 2 9">Specifically phosphorylates the agonist-occupied form of the beta-adrenergic and closely related receptors, probably inducing a desensitization of them (By similarity). Key regulator of LPAR1 signaling (By similarity). Competes with RALA for binding to LPAR1 thus affecting the signaling properties of the receptor (By similarity). Desensitizes LPAR1 and LPAR2 in a phosphorylation-independent manner (By similarity). Positively regulates ciliary smoothened (SMO)-dependent Hedgehog (Hh) signaling pathway by facilitating the trafficking of SMO into the cilium and the stimulation of SMO activity (By similarity). Inhibits relaxation of airway smooth muscle in response to blue light (PubMed:30284927).</text>
</comment>
<comment type="catalytic activity">
    <reaction evidence="3">
        <text>[beta-adrenergic receptor] + ATP = [beta-adrenergic receptor]-phosphate + ADP + H(+)</text>
        <dbReference type="Rhea" id="RHEA:19429"/>
        <dbReference type="Rhea" id="RHEA-COMP:11222"/>
        <dbReference type="Rhea" id="RHEA-COMP:11223"/>
        <dbReference type="ChEBI" id="CHEBI:15378"/>
        <dbReference type="ChEBI" id="CHEBI:30616"/>
        <dbReference type="ChEBI" id="CHEBI:43176"/>
        <dbReference type="ChEBI" id="CHEBI:68546"/>
        <dbReference type="ChEBI" id="CHEBI:456216"/>
        <dbReference type="EC" id="2.7.11.15"/>
    </reaction>
    <physiologicalReaction direction="left-to-right" evidence="3">
        <dbReference type="Rhea" id="RHEA:19430"/>
    </physiologicalReaction>
</comment>
<comment type="activity regulation">
    <text evidence="1">In contrast to other AGC family kinases, the catalytic activity is solely regulated by the binding of substrates and ligands, not by phosphorylation of the kinase domain.</text>
</comment>
<comment type="subunit">
    <text evidence="1 2 3">Interacts with the heterodimer formed by GNB1 and GNG2 (By similarity). Interacts with GIT1 (By similarity). Interacts with, and phosphorylates chemokine-stimulated CCR5 (By similarity). Interacts with ARRB1 (By similarity). Interacts with LPAR1 and LPAR2. Interacts with RALA in response to LPAR1 activation (By similarity). ADRBK1 and RALA mutually inhibit each other's binding to LPAR1 (By similarity). Interacts with ADRB2 (By similarity).</text>
</comment>
<comment type="subcellular location">
    <subcellularLocation>
        <location evidence="3">Cytoplasm</location>
    </subcellularLocation>
    <subcellularLocation>
        <location evidence="1">Cell membrane</location>
    </subcellularLocation>
    <subcellularLocation>
        <location evidence="3">Postsynapse</location>
    </subcellularLocation>
    <subcellularLocation>
        <location evidence="3">Presynapse</location>
    </subcellularLocation>
</comment>
<comment type="domain">
    <text evidence="1">The PH domain binds anionic phospholipids and helps recruiting ADRBK1 from the cytoplasm to plasma membrane close to activated receptors. It mediates binding to G protein beta and gamma subunits, competing with G-alpha subunits and other G-betagamma effectors.</text>
</comment>
<comment type="similarity">
    <text evidence="10">Belongs to the protein kinase superfamily. AGC Ser/Thr protein kinase family. GPRK subfamily.</text>
</comment>
<organism>
    <name type="scientific">Mus musculus</name>
    <name type="common">Mouse</name>
    <dbReference type="NCBI Taxonomy" id="10090"/>
    <lineage>
        <taxon>Eukaryota</taxon>
        <taxon>Metazoa</taxon>
        <taxon>Chordata</taxon>
        <taxon>Craniata</taxon>
        <taxon>Vertebrata</taxon>
        <taxon>Euteleostomi</taxon>
        <taxon>Mammalia</taxon>
        <taxon>Eutheria</taxon>
        <taxon>Euarchontoglires</taxon>
        <taxon>Glires</taxon>
        <taxon>Rodentia</taxon>
        <taxon>Myomorpha</taxon>
        <taxon>Muroidea</taxon>
        <taxon>Muridae</taxon>
        <taxon>Murinae</taxon>
        <taxon>Mus</taxon>
        <taxon>Mus</taxon>
    </lineage>
</organism>
<gene>
    <name evidence="11" type="primary">Grk2</name>
    <name type="synonym">Adrbk1</name>
</gene>
<proteinExistence type="evidence at protein level"/>
<sequence>MADLEAVLADVSYLMAMEKSKATPAARASKKILLPEPSIRSVMQKYLEDRGEVTFEKIFSQKLGYLLFRDFCLNHLEEAKPLVEFYEEIKKYEKLETEEERVVRSREIFDSYIMKELLACSHPFSKNATEHVQGHLVKKQVPPDLFQPYIEEICQNLRGDVFQKFIESDKFTRFCQWKNVELNIHLTMNDFSVHRIIGRGGFGEVYGCRKADTGKMYAMKCLDKKRIKMKQGETLALNERIMLSLVSTGDCPFIVCMSYAFHTPDKLSFILDLMNGGDLHYHLSQHGVFSEADMRFYAAEIILGLEHMHNRFVVYRDLKPANILLDEHGHVRISDLGLACDFSKKRPHASVGTHGYMAPEVLQKGVAYDSSADWFSLGCMLFKLLRGHSPFRQHKTKDKHEIDRMTLTMAVELPDSFSPELRSLLEGLLQRDVNRRLGCLGRGAQEVKESPFFRSLDWQMVFLQKYPPPLIPPRGEVNAADAFDIGSFDEEDTKGIKLLDSDQELYRNFPLTISERWQQEVAETVFDTINAETDRLEARKKAKNKQLGHEEDYALGKDCIVHGYMSKMGNPFLTQWQRRYFYLFPNRLEWRGEGEAPQSLLTMEEIQSVEETQIKERKCLLLKIRGGKQFVLQCDSDPELVQWKKELRDAYREAQQLVQRVPKMKNKPRSPVVELSKVPLIQRGSANGL</sequence>
<evidence type="ECO:0000250" key="1">
    <source>
        <dbReference type="UniProtKB" id="P21146"/>
    </source>
</evidence>
<evidence type="ECO:0000250" key="2">
    <source>
        <dbReference type="UniProtKB" id="P25098"/>
    </source>
</evidence>
<evidence type="ECO:0000250" key="3">
    <source>
        <dbReference type="UniProtKB" id="P26817"/>
    </source>
</evidence>
<evidence type="ECO:0000255" key="4">
    <source>
        <dbReference type="PROSITE-ProRule" id="PRU00145"/>
    </source>
</evidence>
<evidence type="ECO:0000255" key="5">
    <source>
        <dbReference type="PROSITE-ProRule" id="PRU00159"/>
    </source>
</evidence>
<evidence type="ECO:0000255" key="6">
    <source>
        <dbReference type="PROSITE-ProRule" id="PRU00171"/>
    </source>
</evidence>
<evidence type="ECO:0000255" key="7">
    <source>
        <dbReference type="PROSITE-ProRule" id="PRU00618"/>
    </source>
</evidence>
<evidence type="ECO:0000255" key="8">
    <source>
        <dbReference type="PROSITE-ProRule" id="PRU10027"/>
    </source>
</evidence>
<evidence type="ECO:0000269" key="9">
    <source>
    </source>
</evidence>
<evidence type="ECO:0000305" key="10"/>
<evidence type="ECO:0000312" key="11">
    <source>
        <dbReference type="MGI" id="MGI:87940"/>
    </source>
</evidence>
<evidence type="ECO:0007744" key="12">
    <source>
    </source>
</evidence>
<dbReference type="EC" id="2.7.11.15" evidence="3"/>
<dbReference type="EMBL" id="AF333028">
    <property type="protein sequence ID" value="AAK21896.1"/>
    <property type="molecule type" value="mRNA"/>
</dbReference>
<dbReference type="EMBL" id="BC003196">
    <property type="protein sequence ID" value="AAH03196.1"/>
    <property type="molecule type" value="mRNA"/>
</dbReference>
<dbReference type="CCDS" id="CCDS70915.1"/>
<dbReference type="RefSeq" id="NP_001277747.1">
    <property type="nucleotide sequence ID" value="NM_001290818.2"/>
</dbReference>
<dbReference type="SMR" id="Q99MK8"/>
<dbReference type="BioGRID" id="225525">
    <property type="interactions" value="20"/>
</dbReference>
<dbReference type="CORUM" id="Q99MK8"/>
<dbReference type="DIP" id="DIP-32413N"/>
<dbReference type="ELM" id="Q99MK8"/>
<dbReference type="FunCoup" id="Q99MK8">
    <property type="interactions" value="2277"/>
</dbReference>
<dbReference type="IntAct" id="Q99MK8">
    <property type="interactions" value="3"/>
</dbReference>
<dbReference type="STRING" id="10090.ENSMUSP00000086114"/>
<dbReference type="ChEMBL" id="CHEMBL3711486"/>
<dbReference type="iPTMnet" id="Q99MK8"/>
<dbReference type="PhosphoSitePlus" id="Q99MK8"/>
<dbReference type="jPOST" id="Q99MK8"/>
<dbReference type="PaxDb" id="10090-ENSMUSP00000025791"/>
<dbReference type="ProteomicsDB" id="273917"/>
<dbReference type="Pumba" id="Q99MK8"/>
<dbReference type="Antibodypedia" id="16429">
    <property type="antibodies" value="720 antibodies from 42 providers"/>
</dbReference>
<dbReference type="DNASU" id="110355"/>
<dbReference type="Ensembl" id="ENSMUST00000088737.11">
    <property type="protein sequence ID" value="ENSMUSP00000086114.5"/>
    <property type="gene ID" value="ENSMUSG00000024858.15"/>
</dbReference>
<dbReference type="GeneID" id="110355"/>
<dbReference type="KEGG" id="mmu:110355"/>
<dbReference type="UCSC" id="uc008fzu.2">
    <property type="organism name" value="mouse"/>
</dbReference>
<dbReference type="AGR" id="MGI:87940"/>
<dbReference type="CTD" id="156"/>
<dbReference type="MGI" id="MGI:87940">
    <property type="gene designation" value="Grk2"/>
</dbReference>
<dbReference type="VEuPathDB" id="HostDB:ENSMUSG00000024858"/>
<dbReference type="eggNOG" id="KOG0986">
    <property type="taxonomic scope" value="Eukaryota"/>
</dbReference>
<dbReference type="GeneTree" id="ENSGT00940000161626"/>
<dbReference type="InParanoid" id="Q99MK8"/>
<dbReference type="OMA" id="KSVDWQM"/>
<dbReference type="OrthoDB" id="354826at2759"/>
<dbReference type="PhylomeDB" id="Q99MK8"/>
<dbReference type="BRENDA" id="2.7.11.16">
    <property type="organism ID" value="3474"/>
</dbReference>
<dbReference type="Reactome" id="R-MMU-111933">
    <property type="pathway name" value="Calmodulin induced events"/>
</dbReference>
<dbReference type="Reactome" id="R-MMU-416476">
    <property type="pathway name" value="G alpha (q) signalling events"/>
</dbReference>
<dbReference type="Reactome" id="R-MMU-418555">
    <property type="pathway name" value="G alpha (s) signalling events"/>
</dbReference>
<dbReference type="Reactome" id="R-MMU-5635838">
    <property type="pathway name" value="Activation of SMO"/>
</dbReference>
<dbReference type="Reactome" id="R-MMU-8856825">
    <property type="pathway name" value="Cargo recognition for clathrin-mediated endocytosis"/>
</dbReference>
<dbReference type="BioGRID-ORCS" id="110355">
    <property type="hits" value="5 hits in 85 CRISPR screens"/>
</dbReference>
<dbReference type="CD-CODE" id="CE726F99">
    <property type="entry name" value="Postsynaptic density"/>
</dbReference>
<dbReference type="ChiTaRS" id="Grk2">
    <property type="organism name" value="mouse"/>
</dbReference>
<dbReference type="PRO" id="PR:Q99MK8"/>
<dbReference type="Proteomes" id="UP000000589">
    <property type="component" value="Chromosome 19"/>
</dbReference>
<dbReference type="RNAct" id="Q99MK8">
    <property type="molecule type" value="protein"/>
</dbReference>
<dbReference type="Bgee" id="ENSMUSG00000024858">
    <property type="expression patterns" value="Expressed in granulocyte and 288 other cell types or tissues"/>
</dbReference>
<dbReference type="ExpressionAtlas" id="Q99MK8">
    <property type="expression patterns" value="baseline and differential"/>
</dbReference>
<dbReference type="GO" id="GO:0005929">
    <property type="term" value="C:cilium"/>
    <property type="evidence" value="ECO:0000304"/>
    <property type="project" value="Reactome"/>
</dbReference>
<dbReference type="GO" id="GO:0032473">
    <property type="term" value="C:cytoplasmic side of mitochondrial outer membrane"/>
    <property type="evidence" value="ECO:0007669"/>
    <property type="project" value="Ensembl"/>
</dbReference>
<dbReference type="GO" id="GO:0005829">
    <property type="term" value="C:cytosol"/>
    <property type="evidence" value="ECO:0007669"/>
    <property type="project" value="Ensembl"/>
</dbReference>
<dbReference type="GO" id="GO:0016020">
    <property type="term" value="C:membrane"/>
    <property type="evidence" value="ECO:0000314"/>
    <property type="project" value="MGI"/>
</dbReference>
<dbReference type="GO" id="GO:0005886">
    <property type="term" value="C:plasma membrane"/>
    <property type="evidence" value="ECO:0007669"/>
    <property type="project" value="UniProtKB-SubCell"/>
</dbReference>
<dbReference type="GO" id="GO:0098794">
    <property type="term" value="C:postsynapse"/>
    <property type="evidence" value="ECO:0007669"/>
    <property type="project" value="UniProtKB-SubCell"/>
</dbReference>
<dbReference type="GO" id="GO:0098793">
    <property type="term" value="C:presynapse"/>
    <property type="evidence" value="ECO:0007669"/>
    <property type="project" value="UniProtKB-SubCell"/>
</dbReference>
<dbReference type="GO" id="GO:0005524">
    <property type="term" value="F:ATP binding"/>
    <property type="evidence" value="ECO:0007669"/>
    <property type="project" value="UniProtKB-KW"/>
</dbReference>
<dbReference type="GO" id="GO:0047696">
    <property type="term" value="F:beta-adrenergic receptor kinase activity"/>
    <property type="evidence" value="ECO:0007669"/>
    <property type="project" value="UniProtKB-EC"/>
</dbReference>
<dbReference type="GO" id="GO:0031755">
    <property type="term" value="F:Edg-2 lysophosphatidic acid receptor binding"/>
    <property type="evidence" value="ECO:0007669"/>
    <property type="project" value="Ensembl"/>
</dbReference>
<dbReference type="GO" id="GO:0004703">
    <property type="term" value="F:G protein-coupled receptor kinase activity"/>
    <property type="evidence" value="ECO:0000314"/>
    <property type="project" value="MGI"/>
</dbReference>
<dbReference type="GO" id="GO:0004672">
    <property type="term" value="F:protein kinase activity"/>
    <property type="evidence" value="ECO:0000314"/>
    <property type="project" value="MGI"/>
</dbReference>
<dbReference type="GO" id="GO:0004674">
    <property type="term" value="F:protein serine/threonine kinase activity"/>
    <property type="evidence" value="ECO:0000314"/>
    <property type="project" value="MGI"/>
</dbReference>
<dbReference type="GO" id="GO:0060048">
    <property type="term" value="P:cardiac muscle contraction"/>
    <property type="evidence" value="ECO:0007669"/>
    <property type="project" value="Ensembl"/>
</dbReference>
<dbReference type="GO" id="GO:0002029">
    <property type="term" value="P:desensitization of G protein-coupled receptor signaling pathway"/>
    <property type="evidence" value="ECO:0000315"/>
    <property type="project" value="MGI"/>
</dbReference>
<dbReference type="GO" id="GO:0007186">
    <property type="term" value="P:G protein-coupled receptor signaling pathway"/>
    <property type="evidence" value="ECO:0000314"/>
    <property type="project" value="MGI"/>
</dbReference>
<dbReference type="GO" id="GO:0007507">
    <property type="term" value="P:heart development"/>
    <property type="evidence" value="ECO:0000315"/>
    <property type="project" value="MGI"/>
</dbReference>
<dbReference type="GO" id="GO:1901081">
    <property type="term" value="P:negative regulation of relaxation of smooth muscle"/>
    <property type="evidence" value="ECO:0000315"/>
    <property type="project" value="UniProtKB"/>
</dbReference>
<dbReference type="GO" id="GO:0045988">
    <property type="term" value="P:negative regulation of striated muscle contraction"/>
    <property type="evidence" value="ECO:0007669"/>
    <property type="project" value="Ensembl"/>
</dbReference>
<dbReference type="GO" id="GO:0003108">
    <property type="term" value="P:negative regulation of the force of heart contraction by chemical signal"/>
    <property type="evidence" value="ECO:0007669"/>
    <property type="project" value="Ensembl"/>
</dbReference>
<dbReference type="GO" id="GO:0031623">
    <property type="term" value="P:receptor internalization"/>
    <property type="evidence" value="ECO:0007669"/>
    <property type="project" value="Ensembl"/>
</dbReference>
<dbReference type="GO" id="GO:0002026">
    <property type="term" value="P:regulation of the force of heart contraction"/>
    <property type="evidence" value="ECO:0000316"/>
    <property type="project" value="MGI"/>
</dbReference>
<dbReference type="GO" id="GO:0046718">
    <property type="term" value="P:symbiont entry into host cell"/>
    <property type="evidence" value="ECO:0007669"/>
    <property type="project" value="Ensembl"/>
</dbReference>
<dbReference type="GO" id="GO:0007217">
    <property type="term" value="P:tachykinin receptor signaling pathway"/>
    <property type="evidence" value="ECO:0007669"/>
    <property type="project" value="Ensembl"/>
</dbReference>
<dbReference type="GO" id="GO:0019079">
    <property type="term" value="P:viral genome replication"/>
    <property type="evidence" value="ECO:0007669"/>
    <property type="project" value="Ensembl"/>
</dbReference>
<dbReference type="CDD" id="cd01240">
    <property type="entry name" value="PH_GRK2_subgroup"/>
    <property type="match status" value="1"/>
</dbReference>
<dbReference type="CDD" id="cd08747">
    <property type="entry name" value="RGS_GRK2_GRK3"/>
    <property type="match status" value="1"/>
</dbReference>
<dbReference type="CDD" id="cd14223">
    <property type="entry name" value="STKc_GRK2"/>
    <property type="match status" value="1"/>
</dbReference>
<dbReference type="FunFam" id="1.10.510.10:FF:000118">
    <property type="entry name" value="G protein-coupled receptor kinase"/>
    <property type="match status" value="1"/>
</dbReference>
<dbReference type="FunFam" id="2.30.29.30:FF:000084">
    <property type="entry name" value="G protein-coupled receptor kinase"/>
    <property type="match status" value="1"/>
</dbReference>
<dbReference type="FunFam" id="3.30.200.20:FF:000068">
    <property type="entry name" value="G protein-coupled receptor kinase"/>
    <property type="match status" value="1"/>
</dbReference>
<dbReference type="Gene3D" id="3.30.200.20">
    <property type="entry name" value="Phosphorylase Kinase, domain 1"/>
    <property type="match status" value="1"/>
</dbReference>
<dbReference type="Gene3D" id="2.30.29.30">
    <property type="entry name" value="Pleckstrin-homology domain (PH domain)/Phosphotyrosine-binding domain (PTB)"/>
    <property type="match status" value="1"/>
</dbReference>
<dbReference type="Gene3D" id="1.10.167.10">
    <property type="entry name" value="Regulator of G-protein Signalling 4, domain 2"/>
    <property type="match status" value="1"/>
</dbReference>
<dbReference type="Gene3D" id="1.10.510.10">
    <property type="entry name" value="Transferase(Phosphotransferase) domain 1"/>
    <property type="match status" value="1"/>
</dbReference>
<dbReference type="InterPro" id="IPR000961">
    <property type="entry name" value="AGC-kinase_C"/>
</dbReference>
<dbReference type="InterPro" id="IPR000239">
    <property type="entry name" value="GPCR_kinase"/>
</dbReference>
<dbReference type="InterPro" id="IPR011009">
    <property type="entry name" value="Kinase-like_dom_sf"/>
</dbReference>
<dbReference type="InterPro" id="IPR011993">
    <property type="entry name" value="PH-like_dom_sf"/>
</dbReference>
<dbReference type="InterPro" id="IPR001849">
    <property type="entry name" value="PH_domain"/>
</dbReference>
<dbReference type="InterPro" id="IPR000719">
    <property type="entry name" value="Prot_kinase_dom"/>
</dbReference>
<dbReference type="InterPro" id="IPR017441">
    <property type="entry name" value="Protein_kinase_ATP_BS"/>
</dbReference>
<dbReference type="InterPro" id="IPR016137">
    <property type="entry name" value="RGS"/>
</dbReference>
<dbReference type="InterPro" id="IPR036305">
    <property type="entry name" value="RGS_sf"/>
</dbReference>
<dbReference type="InterPro" id="IPR044926">
    <property type="entry name" value="RGS_subdomain_2"/>
</dbReference>
<dbReference type="InterPro" id="IPR008271">
    <property type="entry name" value="Ser/Thr_kinase_AS"/>
</dbReference>
<dbReference type="PANTHER" id="PTHR24355:SF22">
    <property type="entry name" value="BETA-ADRENERGIC RECEPTOR KINASE 1"/>
    <property type="match status" value="1"/>
</dbReference>
<dbReference type="PANTHER" id="PTHR24355">
    <property type="entry name" value="G PROTEIN-COUPLED RECEPTOR KINASE/RIBOSOMAL PROTEIN S6 KINASE"/>
    <property type="match status" value="1"/>
</dbReference>
<dbReference type="Pfam" id="PF00169">
    <property type="entry name" value="PH"/>
    <property type="match status" value="1"/>
</dbReference>
<dbReference type="Pfam" id="PF00069">
    <property type="entry name" value="Pkinase"/>
    <property type="match status" value="1"/>
</dbReference>
<dbReference type="Pfam" id="PF00615">
    <property type="entry name" value="RGS"/>
    <property type="match status" value="1"/>
</dbReference>
<dbReference type="PRINTS" id="PR00717">
    <property type="entry name" value="GPCRKINASE"/>
</dbReference>
<dbReference type="SMART" id="SM00233">
    <property type="entry name" value="PH"/>
    <property type="match status" value="1"/>
</dbReference>
<dbReference type="SMART" id="SM00315">
    <property type="entry name" value="RGS"/>
    <property type="match status" value="1"/>
</dbReference>
<dbReference type="SMART" id="SM00133">
    <property type="entry name" value="S_TK_X"/>
    <property type="match status" value="1"/>
</dbReference>
<dbReference type="SMART" id="SM00220">
    <property type="entry name" value="S_TKc"/>
    <property type="match status" value="1"/>
</dbReference>
<dbReference type="SUPFAM" id="SSF50729">
    <property type="entry name" value="PH domain-like"/>
    <property type="match status" value="1"/>
</dbReference>
<dbReference type="SUPFAM" id="SSF56112">
    <property type="entry name" value="Protein kinase-like (PK-like)"/>
    <property type="match status" value="1"/>
</dbReference>
<dbReference type="SUPFAM" id="SSF48097">
    <property type="entry name" value="Regulator of G-protein signaling, RGS"/>
    <property type="match status" value="1"/>
</dbReference>
<dbReference type="PROSITE" id="PS51285">
    <property type="entry name" value="AGC_KINASE_CTER"/>
    <property type="match status" value="1"/>
</dbReference>
<dbReference type="PROSITE" id="PS50003">
    <property type="entry name" value="PH_DOMAIN"/>
    <property type="match status" value="1"/>
</dbReference>
<dbReference type="PROSITE" id="PS00107">
    <property type="entry name" value="PROTEIN_KINASE_ATP"/>
    <property type="match status" value="1"/>
</dbReference>
<dbReference type="PROSITE" id="PS50011">
    <property type="entry name" value="PROTEIN_KINASE_DOM"/>
    <property type="match status" value="1"/>
</dbReference>
<dbReference type="PROSITE" id="PS00108">
    <property type="entry name" value="PROTEIN_KINASE_ST"/>
    <property type="match status" value="1"/>
</dbReference>
<dbReference type="PROSITE" id="PS50132">
    <property type="entry name" value="RGS"/>
    <property type="match status" value="1"/>
</dbReference>
<protein>
    <recommendedName>
        <fullName>Beta-adrenergic receptor kinase 1</fullName>
        <shortName>Beta-ARK-1</shortName>
        <ecNumber evidence="3">2.7.11.15</ecNumber>
    </recommendedName>
    <alternativeName>
        <fullName evidence="11">G-protein-coupled receptor kinase 2</fullName>
    </alternativeName>
</protein>
<name>ARBK1_MOUSE</name>
<keyword id="KW-0067">ATP-binding</keyword>
<keyword id="KW-1003">Cell membrane</keyword>
<keyword id="KW-0966">Cell projection</keyword>
<keyword id="KW-0963">Cytoplasm</keyword>
<keyword id="KW-0418">Kinase</keyword>
<keyword id="KW-0472">Membrane</keyword>
<keyword id="KW-0547">Nucleotide-binding</keyword>
<keyword id="KW-0597">Phosphoprotein</keyword>
<keyword id="KW-1185">Reference proteome</keyword>
<keyword id="KW-0723">Serine/threonine-protein kinase</keyword>
<keyword id="KW-0770">Synapse</keyword>
<keyword id="KW-0808">Transferase</keyword>
<reference key="1">
    <citation type="journal article" date="1996" name="Am. J. Physiol.">
        <title>Cloning of GRK2 cDNA from S49 murine lymphoma cells.</title>
        <authorList>
            <person name="Hughes R.J."/>
            <person name="Anderson K.L."/>
            <person name="Kiel D."/>
            <person name="Insel P.A."/>
        </authorList>
    </citation>
    <scope>NUCLEOTIDE SEQUENCE [MRNA]</scope>
    <source>
        <tissue>Lymphoma</tissue>
    </source>
</reference>
<reference key="2">
    <citation type="journal article" date="2004" name="Genome Res.">
        <title>The status, quality, and expansion of the NIH full-length cDNA project: the Mammalian Gene Collection (MGC).</title>
        <authorList>
            <consortium name="The MGC Project Team"/>
        </authorList>
    </citation>
    <scope>NUCLEOTIDE SEQUENCE [LARGE SCALE MRNA] OF 3-689</scope>
</reference>
<reference key="3">
    <citation type="journal article" date="2006" name="Mol. Cell. Proteomics">
        <title>Comprehensive identification of phosphorylation sites in postsynaptic density preparations.</title>
        <authorList>
            <person name="Trinidad J.C."/>
            <person name="Specht C.G."/>
            <person name="Thalhammer A."/>
            <person name="Schoepfer R."/>
            <person name="Burlingame A.L."/>
        </authorList>
    </citation>
    <scope>IDENTIFICATION BY MASS SPECTROMETRY [LARGE SCALE ANALYSIS]</scope>
    <source>
        <tissue>Brain</tissue>
    </source>
</reference>
<reference key="4">
    <citation type="journal article" date="2010" name="Cell">
        <title>A tissue-specific atlas of mouse protein phosphorylation and expression.</title>
        <authorList>
            <person name="Huttlin E.L."/>
            <person name="Jedrychowski M.P."/>
            <person name="Elias J.E."/>
            <person name="Goswami T."/>
            <person name="Rad R."/>
            <person name="Beausoleil S.A."/>
            <person name="Villen J."/>
            <person name="Haas W."/>
            <person name="Sowa M.E."/>
            <person name="Gygi S.P."/>
        </authorList>
    </citation>
    <scope>PHOSPHORYLATION [LARGE SCALE ANALYSIS] AT SER-670</scope>
    <scope>IDENTIFICATION BY MASS SPECTROMETRY [LARGE SCALE ANALYSIS]</scope>
    <source>
        <tissue>Brain</tissue>
        <tissue>Lung</tissue>
        <tissue>Spleen</tissue>
    </source>
</reference>
<reference key="5">
    <citation type="journal article" date="2019" name="Am. J. Physiol.">
        <title>Airway smooth muscle photorelaxation via opsin receptor activation.</title>
        <authorList>
            <person name="Yim P.D."/>
            <person name="Gallos G."/>
            <person name="Perez-Zoghbi J.F."/>
            <person name="Zhang Y."/>
            <person name="Xu D."/>
            <person name="Wu A."/>
            <person name="Berkowitz D.E."/>
            <person name="Emala C.W."/>
        </authorList>
    </citation>
    <scope>FUNCTION</scope>
</reference>